<accession>Q8PWS2</accession>
<protein>
    <recommendedName>
        <fullName evidence="1">1-(5-phosphoribosyl)-5-[(5-phosphoribosylamino)methylideneamino] imidazole-4-carboxamide isomerase</fullName>
        <ecNumber evidence="1">5.3.1.16</ecNumber>
    </recommendedName>
    <alternativeName>
        <fullName evidence="1">Phosphoribosylformimino-5-aminoimidazole carboxamide ribotide isomerase</fullName>
    </alternativeName>
</protein>
<name>HIS4_METMA</name>
<evidence type="ECO:0000255" key="1">
    <source>
        <dbReference type="HAMAP-Rule" id="MF_01014"/>
    </source>
</evidence>
<organism>
    <name type="scientific">Methanosarcina mazei (strain ATCC BAA-159 / DSM 3647 / Goe1 / Go1 / JCM 11833 / OCM 88)</name>
    <name type="common">Methanosarcina frisia</name>
    <dbReference type="NCBI Taxonomy" id="192952"/>
    <lineage>
        <taxon>Archaea</taxon>
        <taxon>Methanobacteriati</taxon>
        <taxon>Methanobacteriota</taxon>
        <taxon>Stenosarchaea group</taxon>
        <taxon>Methanomicrobia</taxon>
        <taxon>Methanosarcinales</taxon>
        <taxon>Methanosarcinaceae</taxon>
        <taxon>Methanosarcina</taxon>
    </lineage>
</organism>
<dbReference type="EC" id="5.3.1.16" evidence="1"/>
<dbReference type="EMBL" id="AE008384">
    <property type="protein sequence ID" value="AAM31200.1"/>
    <property type="molecule type" value="Genomic_DNA"/>
</dbReference>
<dbReference type="RefSeq" id="WP_011033450.1">
    <property type="nucleotide sequence ID" value="NC_003901.1"/>
</dbReference>
<dbReference type="SMR" id="Q8PWS2"/>
<dbReference type="GeneID" id="1479846"/>
<dbReference type="GeneID" id="82160549"/>
<dbReference type="KEGG" id="mma:MM_1504"/>
<dbReference type="PATRIC" id="fig|192952.21.peg.1736"/>
<dbReference type="eggNOG" id="arCOG00618">
    <property type="taxonomic scope" value="Archaea"/>
</dbReference>
<dbReference type="HOGENOM" id="CLU_048577_1_1_2"/>
<dbReference type="UniPathway" id="UPA00031">
    <property type="reaction ID" value="UER00009"/>
</dbReference>
<dbReference type="Proteomes" id="UP000000595">
    <property type="component" value="Chromosome"/>
</dbReference>
<dbReference type="GO" id="GO:0005737">
    <property type="term" value="C:cytoplasm"/>
    <property type="evidence" value="ECO:0007669"/>
    <property type="project" value="UniProtKB-SubCell"/>
</dbReference>
<dbReference type="GO" id="GO:0003949">
    <property type="term" value="F:1-(5-phosphoribosyl)-5-[(5-phosphoribosylamino)methylideneamino]imidazole-4-carboxamide isomerase activity"/>
    <property type="evidence" value="ECO:0007669"/>
    <property type="project" value="UniProtKB-UniRule"/>
</dbReference>
<dbReference type="GO" id="GO:0000105">
    <property type="term" value="P:L-histidine biosynthetic process"/>
    <property type="evidence" value="ECO:0007669"/>
    <property type="project" value="UniProtKB-UniRule"/>
</dbReference>
<dbReference type="GO" id="GO:0000162">
    <property type="term" value="P:L-tryptophan biosynthetic process"/>
    <property type="evidence" value="ECO:0007669"/>
    <property type="project" value="TreeGrafter"/>
</dbReference>
<dbReference type="CDD" id="cd04732">
    <property type="entry name" value="HisA"/>
    <property type="match status" value="1"/>
</dbReference>
<dbReference type="FunFam" id="3.20.20.70:FF:000009">
    <property type="entry name" value="1-(5-phosphoribosyl)-5-[(5-phosphoribosylamino)methylideneamino] imidazole-4-carboxamide isomerase"/>
    <property type="match status" value="1"/>
</dbReference>
<dbReference type="Gene3D" id="3.20.20.70">
    <property type="entry name" value="Aldolase class I"/>
    <property type="match status" value="1"/>
</dbReference>
<dbReference type="HAMAP" id="MF_01014">
    <property type="entry name" value="HisA"/>
    <property type="match status" value="1"/>
</dbReference>
<dbReference type="InterPro" id="IPR013785">
    <property type="entry name" value="Aldolase_TIM"/>
</dbReference>
<dbReference type="InterPro" id="IPR006062">
    <property type="entry name" value="His_biosynth"/>
</dbReference>
<dbReference type="InterPro" id="IPR006063">
    <property type="entry name" value="HisA_bact_arch"/>
</dbReference>
<dbReference type="InterPro" id="IPR044524">
    <property type="entry name" value="Isoase_HisA-like"/>
</dbReference>
<dbReference type="InterPro" id="IPR023016">
    <property type="entry name" value="Isoase_HisA-like_bact"/>
</dbReference>
<dbReference type="InterPro" id="IPR011060">
    <property type="entry name" value="RibuloseP-bd_barrel"/>
</dbReference>
<dbReference type="NCBIfam" id="TIGR00007">
    <property type="entry name" value="1-(5-phosphoribosyl)-5-[(5-phosphoribosylamino)methylideneamino]imidazole-4-carboxamide isomerase"/>
    <property type="match status" value="1"/>
</dbReference>
<dbReference type="NCBIfam" id="NF010112">
    <property type="entry name" value="PRK13585.1"/>
    <property type="match status" value="1"/>
</dbReference>
<dbReference type="PANTHER" id="PTHR43090">
    <property type="entry name" value="1-(5-PHOSPHORIBOSYL)-5-[(5-PHOSPHORIBOSYLAMINO)METHYLIDENEAMINO] IMIDAZOLE-4-CARBOXAMIDE ISOMERASE"/>
    <property type="match status" value="1"/>
</dbReference>
<dbReference type="PANTHER" id="PTHR43090:SF7">
    <property type="entry name" value="1-(5-PHOSPHORIBOSYL)-5-[(5-PHOSPHORIBOSYLAMINO)METHYLIDENEAMINO] IMIDAZOLE-4-CARBOXAMIDE ISOMERASE"/>
    <property type="match status" value="1"/>
</dbReference>
<dbReference type="Pfam" id="PF00977">
    <property type="entry name" value="His_biosynth"/>
    <property type="match status" value="1"/>
</dbReference>
<dbReference type="SUPFAM" id="SSF51366">
    <property type="entry name" value="Ribulose-phoshate binding barrel"/>
    <property type="match status" value="1"/>
</dbReference>
<reference key="1">
    <citation type="journal article" date="2002" name="J. Mol. Microbiol. Biotechnol.">
        <title>The genome of Methanosarcina mazei: evidence for lateral gene transfer between Bacteria and Archaea.</title>
        <authorList>
            <person name="Deppenmeier U."/>
            <person name="Johann A."/>
            <person name="Hartsch T."/>
            <person name="Merkl R."/>
            <person name="Schmitz R.A."/>
            <person name="Martinez-Arias R."/>
            <person name="Henne A."/>
            <person name="Wiezer A."/>
            <person name="Baeumer S."/>
            <person name="Jacobi C."/>
            <person name="Brueggemann H."/>
            <person name="Lienard T."/>
            <person name="Christmann A."/>
            <person name="Boemecke M."/>
            <person name="Steckel S."/>
            <person name="Bhattacharyya A."/>
            <person name="Lykidis A."/>
            <person name="Overbeek R."/>
            <person name="Klenk H.-P."/>
            <person name="Gunsalus R.P."/>
            <person name="Fritz H.-J."/>
            <person name="Gottschalk G."/>
        </authorList>
    </citation>
    <scope>NUCLEOTIDE SEQUENCE [LARGE SCALE GENOMIC DNA]</scope>
    <source>
        <strain>ATCC BAA-159 / DSM 3647 / Goe1 / Go1 / JCM 11833 / OCM 88</strain>
    </source>
</reference>
<proteinExistence type="inferred from homology"/>
<feature type="chain" id="PRO_0000142094" description="1-(5-phosphoribosyl)-5-[(5-phosphoribosylamino)methylideneamino] imidazole-4-carboxamide isomerase">
    <location>
        <begin position="1"/>
        <end position="246"/>
    </location>
</feature>
<feature type="active site" description="Proton acceptor" evidence="1">
    <location>
        <position position="10"/>
    </location>
</feature>
<feature type="active site" description="Proton donor" evidence="1">
    <location>
        <position position="135"/>
    </location>
</feature>
<sequence length="246" mass="25713">MVFEVIPAVDMRGGKCVQLVQGVPGSEIVSIDDPLAVALDWVSKGAKTLHLVDLDGAIEGERKNSPIIEKIVNTCKEKGVSIQVGGGIRSFEDAASLLEIGVSRIILGTAALQNPELVKQLSSSFGSSHVNVALDAKNGKISIKGWTEECAQTPVEMGRKFEELGAGSLLFTNIDTEGLMQGVNPVPTKELVESVSIPVIASGGVSTLEDIKTLKKTGAAGVVVGSALYMGRFTLEEAINAALGDI</sequence>
<gene>
    <name evidence="1" type="primary">hisA</name>
    <name type="ordered locus">MM_1504</name>
</gene>
<comment type="catalytic activity">
    <reaction evidence="1">
        <text>1-(5-phospho-beta-D-ribosyl)-5-[(5-phospho-beta-D-ribosylamino)methylideneamino]imidazole-4-carboxamide = 5-[(5-phospho-1-deoxy-D-ribulos-1-ylimino)methylamino]-1-(5-phospho-beta-D-ribosyl)imidazole-4-carboxamide</text>
        <dbReference type="Rhea" id="RHEA:15469"/>
        <dbReference type="ChEBI" id="CHEBI:58435"/>
        <dbReference type="ChEBI" id="CHEBI:58525"/>
        <dbReference type="EC" id="5.3.1.16"/>
    </reaction>
</comment>
<comment type="pathway">
    <text evidence="1">Amino-acid biosynthesis; L-histidine biosynthesis; L-histidine from 5-phospho-alpha-D-ribose 1-diphosphate: step 4/9.</text>
</comment>
<comment type="subcellular location">
    <subcellularLocation>
        <location evidence="1">Cytoplasm</location>
    </subcellularLocation>
</comment>
<comment type="similarity">
    <text evidence="1">Belongs to the HisA/HisF family.</text>
</comment>
<keyword id="KW-0028">Amino-acid biosynthesis</keyword>
<keyword id="KW-0963">Cytoplasm</keyword>
<keyword id="KW-0368">Histidine biosynthesis</keyword>
<keyword id="KW-0413">Isomerase</keyword>